<name>Y641_THEON</name>
<dbReference type="EMBL" id="CP000855">
    <property type="protein sequence ID" value="ACJ16128.1"/>
    <property type="molecule type" value="Genomic_DNA"/>
</dbReference>
<dbReference type="RefSeq" id="WP_012571600.1">
    <property type="nucleotide sequence ID" value="NC_011529.1"/>
</dbReference>
<dbReference type="SMR" id="B6YUU2"/>
<dbReference type="STRING" id="523850.TON_0641"/>
<dbReference type="GeneID" id="7016940"/>
<dbReference type="KEGG" id="ton:TON_0641"/>
<dbReference type="PATRIC" id="fig|523850.10.peg.643"/>
<dbReference type="eggNOG" id="arCOG04058">
    <property type="taxonomic scope" value="Archaea"/>
</dbReference>
<dbReference type="HOGENOM" id="CLU_130694_6_1_2"/>
<dbReference type="OrthoDB" id="53248at2157"/>
<dbReference type="Proteomes" id="UP000002727">
    <property type="component" value="Chromosome"/>
</dbReference>
<dbReference type="GO" id="GO:0005737">
    <property type="term" value="C:cytoplasm"/>
    <property type="evidence" value="ECO:0007669"/>
    <property type="project" value="TreeGrafter"/>
</dbReference>
<dbReference type="Gene3D" id="3.30.1200.10">
    <property type="entry name" value="YggU-like"/>
    <property type="match status" value="1"/>
</dbReference>
<dbReference type="HAMAP" id="MF_00634">
    <property type="entry name" value="UPF0235"/>
    <property type="match status" value="1"/>
</dbReference>
<dbReference type="InterPro" id="IPR003746">
    <property type="entry name" value="DUF167"/>
</dbReference>
<dbReference type="InterPro" id="IPR036591">
    <property type="entry name" value="YggU-like_sf"/>
</dbReference>
<dbReference type="NCBIfam" id="TIGR00251">
    <property type="entry name" value="DUF167 family protein"/>
    <property type="match status" value="1"/>
</dbReference>
<dbReference type="PANTHER" id="PTHR13420">
    <property type="entry name" value="UPF0235 PROTEIN C15ORF40"/>
    <property type="match status" value="1"/>
</dbReference>
<dbReference type="PANTHER" id="PTHR13420:SF7">
    <property type="entry name" value="UPF0235 PROTEIN C15ORF40"/>
    <property type="match status" value="1"/>
</dbReference>
<dbReference type="Pfam" id="PF02594">
    <property type="entry name" value="DUF167"/>
    <property type="match status" value="1"/>
</dbReference>
<dbReference type="SMART" id="SM01152">
    <property type="entry name" value="DUF167"/>
    <property type="match status" value="1"/>
</dbReference>
<dbReference type="SUPFAM" id="SSF69786">
    <property type="entry name" value="YggU-like"/>
    <property type="match status" value="1"/>
</dbReference>
<feature type="chain" id="PRO_1000130716" description="UPF0235 protein TON_0641">
    <location>
        <begin position="1"/>
        <end position="94"/>
    </location>
</feature>
<accession>B6YUU2</accession>
<organism>
    <name type="scientific">Thermococcus onnurineus (strain NA1)</name>
    <dbReference type="NCBI Taxonomy" id="523850"/>
    <lineage>
        <taxon>Archaea</taxon>
        <taxon>Methanobacteriati</taxon>
        <taxon>Methanobacteriota</taxon>
        <taxon>Thermococci</taxon>
        <taxon>Thermococcales</taxon>
        <taxon>Thermococcaceae</taxon>
        <taxon>Thermococcus</taxon>
    </lineage>
</organism>
<protein>
    <recommendedName>
        <fullName evidence="1">UPF0235 protein TON_0641</fullName>
    </recommendedName>
</protein>
<reference key="1">
    <citation type="journal article" date="2008" name="J. Bacteriol.">
        <title>The complete genome sequence of Thermococcus onnurineus NA1 reveals a mixed heterotrophic and carboxydotrophic metabolism.</title>
        <authorList>
            <person name="Lee H.S."/>
            <person name="Kang S.G."/>
            <person name="Bae S.S."/>
            <person name="Lim J.K."/>
            <person name="Cho Y."/>
            <person name="Kim Y.J."/>
            <person name="Jeon J.H."/>
            <person name="Cha S.-S."/>
            <person name="Kwon K.K."/>
            <person name="Kim H.-T."/>
            <person name="Park C.-J."/>
            <person name="Lee H.-W."/>
            <person name="Kim S.I."/>
            <person name="Chun J."/>
            <person name="Colwell R.R."/>
            <person name="Kim S.-J."/>
            <person name="Lee J.-H."/>
        </authorList>
    </citation>
    <scope>NUCLEOTIDE SEQUENCE [LARGE SCALE GENOMIC DNA]</scope>
    <source>
        <strain>NA1</strain>
    </source>
</reference>
<proteinExistence type="inferred from homology"/>
<gene>
    <name type="ordered locus">TON_0641</name>
</gene>
<comment type="similarity">
    <text evidence="1">Belongs to the UPF0235 family.</text>
</comment>
<sequence length="94" mass="10629">MKFIRETKDGAVILLYVQPKAKKNEIEGVDEWRGRLKVKIKAPPVEGKANKEVVRFFSKMLGTEVEIIRGGTSREKDLLVKGFSSKEVLKKLGL</sequence>
<evidence type="ECO:0000255" key="1">
    <source>
        <dbReference type="HAMAP-Rule" id="MF_00634"/>
    </source>
</evidence>